<comment type="function">
    <text evidence="1">Catalyzes the conversion of S-adenosyl-L-methionine (SAM) to carboxy-S-adenosyl-L-methionine (Cx-SAM).</text>
</comment>
<comment type="catalytic activity">
    <reaction evidence="1">
        <text>prephenate + S-adenosyl-L-methionine = carboxy-S-adenosyl-L-methionine + 3-phenylpyruvate + H2O</text>
        <dbReference type="Rhea" id="RHEA:51692"/>
        <dbReference type="ChEBI" id="CHEBI:15377"/>
        <dbReference type="ChEBI" id="CHEBI:18005"/>
        <dbReference type="ChEBI" id="CHEBI:29934"/>
        <dbReference type="ChEBI" id="CHEBI:59789"/>
        <dbReference type="ChEBI" id="CHEBI:134278"/>
    </reaction>
</comment>
<comment type="subunit">
    <text evidence="1">Homodimer.</text>
</comment>
<comment type="similarity">
    <text evidence="1">Belongs to the class I-like SAM-binding methyltransferase superfamily. Cx-SAM synthase family.</text>
</comment>
<evidence type="ECO:0000255" key="1">
    <source>
        <dbReference type="HAMAP-Rule" id="MF_01589"/>
    </source>
</evidence>
<evidence type="ECO:0000256" key="2">
    <source>
        <dbReference type="SAM" id="MobiDB-lite"/>
    </source>
</evidence>
<gene>
    <name evidence="1" type="primary">cmoA2</name>
    <name type="ordered locus">YPTS_2092</name>
</gene>
<proteinExistence type="inferred from homology"/>
<accession>B2K316</accession>
<reference key="1">
    <citation type="submission" date="2008-04" db="EMBL/GenBank/DDBJ databases">
        <title>Complete sequence of Yersinia pseudotuberculosis PB1/+.</title>
        <authorList>
            <person name="Copeland A."/>
            <person name="Lucas S."/>
            <person name="Lapidus A."/>
            <person name="Glavina del Rio T."/>
            <person name="Dalin E."/>
            <person name="Tice H."/>
            <person name="Bruce D."/>
            <person name="Goodwin L."/>
            <person name="Pitluck S."/>
            <person name="Munk A.C."/>
            <person name="Brettin T."/>
            <person name="Detter J.C."/>
            <person name="Han C."/>
            <person name="Tapia R."/>
            <person name="Schmutz J."/>
            <person name="Larimer F."/>
            <person name="Land M."/>
            <person name="Hauser L."/>
            <person name="Challacombe J.F."/>
            <person name="Green L."/>
            <person name="Lindler L.E."/>
            <person name="Nikolich M.P."/>
            <person name="Richardson P."/>
        </authorList>
    </citation>
    <scope>NUCLEOTIDE SEQUENCE [LARGE SCALE GENOMIC DNA]</scope>
    <source>
        <strain>PB1/+</strain>
    </source>
</reference>
<keyword id="KW-0949">S-adenosyl-L-methionine</keyword>
<keyword id="KW-0808">Transferase</keyword>
<dbReference type="EC" id="2.1.3.-" evidence="1"/>
<dbReference type="EMBL" id="CP001048">
    <property type="protein sequence ID" value="ACC89055.1"/>
    <property type="molecule type" value="Genomic_DNA"/>
</dbReference>
<dbReference type="SMR" id="B2K316"/>
<dbReference type="KEGG" id="ypb:YPTS_2092"/>
<dbReference type="PATRIC" id="fig|502801.10.peg.1482"/>
<dbReference type="GO" id="GO:0016743">
    <property type="term" value="F:carboxyl- or carbamoyltransferase activity"/>
    <property type="evidence" value="ECO:0007669"/>
    <property type="project" value="UniProtKB-UniRule"/>
</dbReference>
<dbReference type="GO" id="GO:1904047">
    <property type="term" value="F:S-adenosyl-L-methionine binding"/>
    <property type="evidence" value="ECO:0007669"/>
    <property type="project" value="UniProtKB-UniRule"/>
</dbReference>
<dbReference type="GO" id="GO:0002098">
    <property type="term" value="P:tRNA wobble uridine modification"/>
    <property type="evidence" value="ECO:0007669"/>
    <property type="project" value="InterPro"/>
</dbReference>
<dbReference type="CDD" id="cd02440">
    <property type="entry name" value="AdoMet_MTases"/>
    <property type="match status" value="1"/>
</dbReference>
<dbReference type="Gene3D" id="3.40.50.150">
    <property type="entry name" value="Vaccinia Virus protein VP39"/>
    <property type="match status" value="1"/>
</dbReference>
<dbReference type="HAMAP" id="MF_01589">
    <property type="entry name" value="Cx_SAM_synthase"/>
    <property type="match status" value="1"/>
</dbReference>
<dbReference type="InterPro" id="IPR005271">
    <property type="entry name" value="CmoA"/>
</dbReference>
<dbReference type="InterPro" id="IPR041698">
    <property type="entry name" value="Methyltransf_25"/>
</dbReference>
<dbReference type="InterPro" id="IPR029063">
    <property type="entry name" value="SAM-dependent_MTases_sf"/>
</dbReference>
<dbReference type="NCBIfam" id="TIGR00740">
    <property type="entry name" value="carboxy-S-adenosyl-L-methionine synthase CmoA"/>
    <property type="match status" value="1"/>
</dbReference>
<dbReference type="NCBIfam" id="NF011995">
    <property type="entry name" value="PRK15451.1"/>
    <property type="match status" value="1"/>
</dbReference>
<dbReference type="PANTHER" id="PTHR43861:SF2">
    <property type="entry name" value="CARBOXY-S-ADENOSYL-L-METHIONINE SYNTHASE"/>
    <property type="match status" value="1"/>
</dbReference>
<dbReference type="PANTHER" id="PTHR43861">
    <property type="entry name" value="TRANS-ACONITATE 2-METHYLTRANSFERASE-RELATED"/>
    <property type="match status" value="1"/>
</dbReference>
<dbReference type="Pfam" id="PF13649">
    <property type="entry name" value="Methyltransf_25"/>
    <property type="match status" value="1"/>
</dbReference>
<dbReference type="PIRSF" id="PIRSF006325">
    <property type="entry name" value="MeTrfase_bac"/>
    <property type="match status" value="1"/>
</dbReference>
<dbReference type="SUPFAM" id="SSF53335">
    <property type="entry name" value="S-adenosyl-L-methionine-dependent methyltransferases"/>
    <property type="match status" value="1"/>
</dbReference>
<organism>
    <name type="scientific">Yersinia pseudotuberculosis serotype IB (strain PB1/+)</name>
    <dbReference type="NCBI Taxonomy" id="502801"/>
    <lineage>
        <taxon>Bacteria</taxon>
        <taxon>Pseudomonadati</taxon>
        <taxon>Pseudomonadota</taxon>
        <taxon>Gammaproteobacteria</taxon>
        <taxon>Enterobacterales</taxon>
        <taxon>Yersiniaceae</taxon>
        <taxon>Yersinia</taxon>
    </lineage>
</organism>
<feature type="chain" id="PRO_0000381964" description="Carboxy-S-adenosyl-L-methionine synthase 2">
    <location>
        <begin position="1"/>
        <end position="267"/>
    </location>
</feature>
<feature type="region of interest" description="Disordered" evidence="2">
    <location>
        <begin position="1"/>
        <end position="25"/>
    </location>
</feature>
<feature type="compositionally biased region" description="Polar residues" evidence="2">
    <location>
        <begin position="1"/>
        <end position="11"/>
    </location>
</feature>
<feature type="compositionally biased region" description="Basic and acidic residues" evidence="2">
    <location>
        <begin position="12"/>
        <end position="24"/>
    </location>
</feature>
<feature type="binding site" evidence="1">
    <location>
        <position position="59"/>
    </location>
    <ligand>
        <name>S-adenosyl-L-methionine</name>
        <dbReference type="ChEBI" id="CHEBI:59789"/>
    </ligand>
</feature>
<feature type="binding site" evidence="1">
    <location>
        <begin position="84"/>
        <end position="86"/>
    </location>
    <ligand>
        <name>S-adenosyl-L-methionine</name>
        <dbReference type="ChEBI" id="CHEBI:59789"/>
    </ligand>
</feature>
<feature type="binding site" evidence="1">
    <location>
        <begin position="109"/>
        <end position="110"/>
    </location>
    <ligand>
        <name>S-adenosyl-L-methionine</name>
        <dbReference type="ChEBI" id="CHEBI:59789"/>
    </ligand>
</feature>
<feature type="binding site" evidence="1">
    <location>
        <begin position="137"/>
        <end position="138"/>
    </location>
    <ligand>
        <name>S-adenosyl-L-methionine</name>
        <dbReference type="ChEBI" id="CHEBI:59789"/>
    </ligand>
</feature>
<feature type="binding site" evidence="1">
    <location>
        <position position="152"/>
    </location>
    <ligand>
        <name>S-adenosyl-L-methionine</name>
        <dbReference type="ChEBI" id="CHEBI:59789"/>
    </ligand>
</feature>
<feature type="binding site" evidence="1">
    <location>
        <position position="219"/>
    </location>
    <ligand>
        <name>S-adenosyl-L-methionine</name>
        <dbReference type="ChEBI" id="CHEBI:59789"/>
    </ligand>
</feature>
<protein>
    <recommendedName>
        <fullName evidence="1">Carboxy-S-adenosyl-L-methionine synthase 2</fullName>
        <shortName evidence="1">Cx-SAM synthase 2</shortName>
        <ecNumber evidence="1">2.1.3.-</ecNumber>
    </recommendedName>
</protein>
<name>CMOA2_YERPB</name>
<sequence>MPNRDTQSQNDTPRHSPEAAEPQRDSLFAAPIAKLGDWTFDEKVAEVFPDMIQRSVPGYSNIISMIGMLAERFVQPNSQIYDLGCSLGAATLSMRRNIKAEGCKIIAVDNSPAMVERCRRHIDAFRAETPVDVVEADILDIKLENASMVVLNFTLQFLEPANRQRLLNQVYQGLRPGGALVLSEKFSFADHNVGELLFNMHHDFKRANGYSELEISQKRSMLENVMLTDSVETHKNRLHQAGFEHAEVWFQCFNFGSLIALKAGEAQ</sequence>